<feature type="chain" id="PRO_0000346520" description="PKHD-type hydroxylase YbiX">
    <location>
        <begin position="1"/>
        <end position="225"/>
    </location>
</feature>
<feature type="domain" description="Fe2OG dioxygenase" evidence="1">
    <location>
        <begin position="78"/>
        <end position="177"/>
    </location>
</feature>
<feature type="binding site" evidence="1">
    <location>
        <position position="96"/>
    </location>
    <ligand>
        <name>Fe cation</name>
        <dbReference type="ChEBI" id="CHEBI:24875"/>
    </ligand>
</feature>
<feature type="binding site" evidence="1">
    <location>
        <position position="98"/>
    </location>
    <ligand>
        <name>Fe cation</name>
        <dbReference type="ChEBI" id="CHEBI:24875"/>
    </ligand>
</feature>
<feature type="binding site" evidence="1">
    <location>
        <position position="158"/>
    </location>
    <ligand>
        <name>Fe cation</name>
        <dbReference type="ChEBI" id="CHEBI:24875"/>
    </ligand>
</feature>
<feature type="binding site" evidence="1">
    <location>
        <position position="168"/>
    </location>
    <ligand>
        <name>2-oxoglutarate</name>
        <dbReference type="ChEBI" id="CHEBI:16810"/>
    </ligand>
</feature>
<evidence type="ECO:0000255" key="1">
    <source>
        <dbReference type="HAMAP-Rule" id="MF_00657"/>
    </source>
</evidence>
<evidence type="ECO:0000305" key="2"/>
<name>YBIX_SHIBS</name>
<reference key="1">
    <citation type="journal article" date="2005" name="Nucleic Acids Res.">
        <title>Genome dynamics and diversity of Shigella species, the etiologic agents of bacillary dysentery.</title>
        <authorList>
            <person name="Yang F."/>
            <person name="Yang J."/>
            <person name="Zhang X."/>
            <person name="Chen L."/>
            <person name="Jiang Y."/>
            <person name="Yan Y."/>
            <person name="Tang X."/>
            <person name="Wang J."/>
            <person name="Xiong Z."/>
            <person name="Dong J."/>
            <person name="Xue Y."/>
            <person name="Zhu Y."/>
            <person name="Xu X."/>
            <person name="Sun L."/>
            <person name="Chen S."/>
            <person name="Nie H."/>
            <person name="Peng J."/>
            <person name="Xu J."/>
            <person name="Wang Y."/>
            <person name="Yuan Z."/>
            <person name="Wen Y."/>
            <person name="Yao Z."/>
            <person name="Shen Y."/>
            <person name="Qiang B."/>
            <person name="Hou Y."/>
            <person name="Yu J."/>
            <person name="Jin Q."/>
        </authorList>
    </citation>
    <scope>NUCLEOTIDE SEQUENCE [LARGE SCALE GENOMIC DNA]</scope>
    <source>
        <strain>Sb227</strain>
    </source>
</reference>
<comment type="cofactor">
    <cofactor evidence="1">
        <name>Fe(2+)</name>
        <dbReference type="ChEBI" id="CHEBI:29033"/>
    </cofactor>
    <text evidence="1">Binds 1 Fe(2+) ion per subunit.</text>
</comment>
<comment type="cofactor">
    <cofactor evidence="1">
        <name>L-ascorbate</name>
        <dbReference type="ChEBI" id="CHEBI:38290"/>
    </cofactor>
</comment>
<comment type="sequence caution" evidence="2">
    <conflict type="erroneous initiation">
        <sequence resource="EMBL-CDS" id="ABB65368"/>
    </conflict>
</comment>
<accession>Q323Z0</accession>
<organism>
    <name type="scientific">Shigella boydii serotype 4 (strain Sb227)</name>
    <dbReference type="NCBI Taxonomy" id="300268"/>
    <lineage>
        <taxon>Bacteria</taxon>
        <taxon>Pseudomonadati</taxon>
        <taxon>Pseudomonadota</taxon>
        <taxon>Gammaproteobacteria</taxon>
        <taxon>Enterobacterales</taxon>
        <taxon>Enterobacteriaceae</taxon>
        <taxon>Shigella</taxon>
    </lineage>
</organism>
<keyword id="KW-0223">Dioxygenase</keyword>
<keyword id="KW-0408">Iron</keyword>
<keyword id="KW-0479">Metal-binding</keyword>
<keyword id="KW-0560">Oxidoreductase</keyword>
<keyword id="KW-0847">Vitamin C</keyword>
<proteinExistence type="inferred from homology"/>
<protein>
    <recommendedName>
        <fullName evidence="1">PKHD-type hydroxylase YbiX</fullName>
        <ecNumber evidence="1">1.14.11.-</ecNumber>
    </recommendedName>
</protein>
<dbReference type="EC" id="1.14.11.-" evidence="1"/>
<dbReference type="EMBL" id="CP000036">
    <property type="protein sequence ID" value="ABB65368.1"/>
    <property type="status" value="ALT_INIT"/>
    <property type="molecule type" value="Genomic_DNA"/>
</dbReference>
<dbReference type="RefSeq" id="WP_000990175.1">
    <property type="nucleotide sequence ID" value="NC_007613.1"/>
</dbReference>
<dbReference type="SMR" id="Q323Z0"/>
<dbReference type="KEGG" id="sbo:SBO_0692"/>
<dbReference type="HOGENOM" id="CLU_106663_0_0_6"/>
<dbReference type="Proteomes" id="UP000007067">
    <property type="component" value="Chromosome"/>
</dbReference>
<dbReference type="GO" id="GO:0016706">
    <property type="term" value="F:2-oxoglutarate-dependent dioxygenase activity"/>
    <property type="evidence" value="ECO:0007669"/>
    <property type="project" value="UniProtKB-UniRule"/>
</dbReference>
<dbReference type="GO" id="GO:0005506">
    <property type="term" value="F:iron ion binding"/>
    <property type="evidence" value="ECO:0007669"/>
    <property type="project" value="UniProtKB-UniRule"/>
</dbReference>
<dbReference type="GO" id="GO:0031418">
    <property type="term" value="F:L-ascorbic acid binding"/>
    <property type="evidence" value="ECO:0007669"/>
    <property type="project" value="UniProtKB-KW"/>
</dbReference>
<dbReference type="GO" id="GO:0006974">
    <property type="term" value="P:DNA damage response"/>
    <property type="evidence" value="ECO:0007669"/>
    <property type="project" value="TreeGrafter"/>
</dbReference>
<dbReference type="GO" id="GO:0006879">
    <property type="term" value="P:intracellular iron ion homeostasis"/>
    <property type="evidence" value="ECO:0007669"/>
    <property type="project" value="TreeGrafter"/>
</dbReference>
<dbReference type="FunFam" id="2.60.120.620:FF:000006">
    <property type="entry name" value="PKHD-type hydroxylase YbiX"/>
    <property type="match status" value="1"/>
</dbReference>
<dbReference type="FunFam" id="4.10.860.20:FF:000001">
    <property type="entry name" value="PKHD-type hydroxylase YbiX"/>
    <property type="match status" value="1"/>
</dbReference>
<dbReference type="Gene3D" id="2.60.120.620">
    <property type="entry name" value="q2cbj1_9rhob like domain"/>
    <property type="match status" value="1"/>
</dbReference>
<dbReference type="Gene3D" id="4.10.860.20">
    <property type="entry name" value="Rabenosyn, Rab binding domain"/>
    <property type="match status" value="1"/>
</dbReference>
<dbReference type="HAMAP" id="MF_00657">
    <property type="entry name" value="Hydroxyl_YbiX"/>
    <property type="match status" value="1"/>
</dbReference>
<dbReference type="InterPro" id="IPR005123">
    <property type="entry name" value="Oxoglu/Fe-dep_dioxygenase_dom"/>
</dbReference>
<dbReference type="InterPro" id="IPR041097">
    <property type="entry name" value="PKHD_C"/>
</dbReference>
<dbReference type="InterPro" id="IPR023550">
    <property type="entry name" value="PKHD_hydroxylase"/>
</dbReference>
<dbReference type="InterPro" id="IPR006620">
    <property type="entry name" value="Pro_4_hyd_alph"/>
</dbReference>
<dbReference type="InterPro" id="IPR044862">
    <property type="entry name" value="Pro_4_hyd_alph_FE2OG_OXY"/>
</dbReference>
<dbReference type="NCBIfam" id="NF003972">
    <property type="entry name" value="PRK05467.1-1"/>
    <property type="match status" value="1"/>
</dbReference>
<dbReference type="NCBIfam" id="NF003974">
    <property type="entry name" value="PRK05467.1-3"/>
    <property type="match status" value="1"/>
</dbReference>
<dbReference type="NCBIfam" id="NF003975">
    <property type="entry name" value="PRK05467.1-4"/>
    <property type="match status" value="1"/>
</dbReference>
<dbReference type="PANTHER" id="PTHR41536">
    <property type="entry name" value="PKHD-TYPE HYDROXYLASE YBIX"/>
    <property type="match status" value="1"/>
</dbReference>
<dbReference type="PANTHER" id="PTHR41536:SF1">
    <property type="entry name" value="PKHD-TYPE HYDROXYLASE YBIX"/>
    <property type="match status" value="1"/>
</dbReference>
<dbReference type="Pfam" id="PF13640">
    <property type="entry name" value="2OG-FeII_Oxy_3"/>
    <property type="match status" value="1"/>
</dbReference>
<dbReference type="Pfam" id="PF18331">
    <property type="entry name" value="PKHD_C"/>
    <property type="match status" value="1"/>
</dbReference>
<dbReference type="SMART" id="SM00702">
    <property type="entry name" value="P4Hc"/>
    <property type="match status" value="1"/>
</dbReference>
<dbReference type="SUPFAM" id="SSF51197">
    <property type="entry name" value="Clavaminate synthase-like"/>
    <property type="match status" value="1"/>
</dbReference>
<dbReference type="PROSITE" id="PS51471">
    <property type="entry name" value="FE2OG_OXY"/>
    <property type="match status" value="1"/>
</dbReference>
<sequence>MMYHIPGVLSPQDVARFREQLEQAEWVDGRVTTGAQGAQVKNNQQVDTRSTLYAALQNEVLNAVNQHALFFAAALPRTLSTPLFNRYQNNETYGFHVDGAVRSHPQNGWMRTDLSATLFLSDPQSYDGGELVVNDTFGQHRVKLPAGDLVLYPSSSLHCVTPVTRGVRVASFMWIQSMIRDDKKRAMLFELDKNIQSLKSRYGENEEILSLLNLYHNLLREWSEI</sequence>
<gene>
    <name evidence="1" type="primary">ybiX</name>
    <name type="ordered locus">SBO_0692</name>
</gene>